<protein>
    <recommendedName>
        <fullName evidence="1">Phosphopantetheine adenylyltransferase</fullName>
        <ecNumber evidence="1">2.7.7.3</ecNumber>
    </recommendedName>
    <alternativeName>
        <fullName evidence="1">Dephospho-CoA pyrophosphorylase</fullName>
    </alternativeName>
    <alternativeName>
        <fullName evidence="1">Pantetheine-phosphate adenylyltransferase</fullName>
        <shortName evidence="1">PPAT</shortName>
    </alternativeName>
</protein>
<comment type="function">
    <text evidence="1">Reversibly transfers an adenylyl group from ATP to 4'-phosphopantetheine, yielding dephospho-CoA (dPCoA) and pyrophosphate.</text>
</comment>
<comment type="catalytic activity">
    <reaction evidence="1">
        <text>(R)-4'-phosphopantetheine + ATP + H(+) = 3'-dephospho-CoA + diphosphate</text>
        <dbReference type="Rhea" id="RHEA:19801"/>
        <dbReference type="ChEBI" id="CHEBI:15378"/>
        <dbReference type="ChEBI" id="CHEBI:30616"/>
        <dbReference type="ChEBI" id="CHEBI:33019"/>
        <dbReference type="ChEBI" id="CHEBI:57328"/>
        <dbReference type="ChEBI" id="CHEBI:61723"/>
        <dbReference type="EC" id="2.7.7.3"/>
    </reaction>
</comment>
<comment type="cofactor">
    <cofactor evidence="1">
        <name>Mg(2+)</name>
        <dbReference type="ChEBI" id="CHEBI:18420"/>
    </cofactor>
</comment>
<comment type="pathway">
    <text evidence="1">Cofactor biosynthesis; coenzyme A biosynthesis; CoA from (R)-pantothenate: step 4/5.</text>
</comment>
<comment type="subunit">
    <text evidence="1">Homohexamer.</text>
</comment>
<comment type="subcellular location">
    <subcellularLocation>
        <location evidence="1">Cytoplasm</location>
    </subcellularLocation>
</comment>
<comment type="similarity">
    <text evidence="1">Belongs to the bacterial CoaD family.</text>
</comment>
<feature type="chain" id="PRO_1000096770" description="Phosphopantetheine adenylyltransferase">
    <location>
        <begin position="1"/>
        <end position="165"/>
    </location>
</feature>
<feature type="binding site" evidence="1">
    <location>
        <begin position="9"/>
        <end position="10"/>
    </location>
    <ligand>
        <name>ATP</name>
        <dbReference type="ChEBI" id="CHEBI:30616"/>
    </ligand>
</feature>
<feature type="binding site" evidence="1">
    <location>
        <position position="9"/>
    </location>
    <ligand>
        <name>substrate</name>
    </ligand>
</feature>
<feature type="binding site" evidence="1">
    <location>
        <position position="17"/>
    </location>
    <ligand>
        <name>ATP</name>
        <dbReference type="ChEBI" id="CHEBI:30616"/>
    </ligand>
</feature>
<feature type="binding site" evidence="1">
    <location>
        <position position="41"/>
    </location>
    <ligand>
        <name>substrate</name>
    </ligand>
</feature>
<feature type="binding site" evidence="1">
    <location>
        <position position="73"/>
    </location>
    <ligand>
        <name>substrate</name>
    </ligand>
</feature>
<feature type="binding site" evidence="1">
    <location>
        <position position="87"/>
    </location>
    <ligand>
        <name>substrate</name>
    </ligand>
</feature>
<feature type="binding site" evidence="1">
    <location>
        <begin position="88"/>
        <end position="90"/>
    </location>
    <ligand>
        <name>ATP</name>
        <dbReference type="ChEBI" id="CHEBI:30616"/>
    </ligand>
</feature>
<feature type="binding site" evidence="1">
    <location>
        <position position="98"/>
    </location>
    <ligand>
        <name>ATP</name>
        <dbReference type="ChEBI" id="CHEBI:30616"/>
    </ligand>
</feature>
<feature type="binding site" evidence="1">
    <location>
        <begin position="123"/>
        <end position="129"/>
    </location>
    <ligand>
        <name>ATP</name>
        <dbReference type="ChEBI" id="CHEBI:30616"/>
    </ligand>
</feature>
<feature type="site" description="Transition state stabilizer" evidence="1">
    <location>
        <position position="17"/>
    </location>
</feature>
<accession>B1YN57</accession>
<sequence>MVVAVYPGTFDPLTRGHEDLVRRASSIFDTLVVGVADSRAKKPFFSLEERLKIANEVLGHYPNVKVMGFKGLLKDFVRTNNARVIVRGLRAVSDFEYEFQMAGMNRYLLPDVETMFMTPSDQYQFISGTIVREIAQLGGDVSKFVFPSVEKWLTEKVAAMGGPAA</sequence>
<reference key="1">
    <citation type="submission" date="2008-04" db="EMBL/GenBank/DDBJ databases">
        <title>Complete sequence of chromosome 1 of Burkholderia ambifaria MC40-6.</title>
        <authorList>
            <person name="Copeland A."/>
            <person name="Lucas S."/>
            <person name="Lapidus A."/>
            <person name="Glavina del Rio T."/>
            <person name="Dalin E."/>
            <person name="Tice H."/>
            <person name="Pitluck S."/>
            <person name="Chain P."/>
            <person name="Malfatti S."/>
            <person name="Shin M."/>
            <person name="Vergez L."/>
            <person name="Lang D."/>
            <person name="Schmutz J."/>
            <person name="Larimer F."/>
            <person name="Land M."/>
            <person name="Hauser L."/>
            <person name="Kyrpides N."/>
            <person name="Lykidis A."/>
            <person name="Ramette A."/>
            <person name="Konstantinidis K."/>
            <person name="Tiedje J."/>
            <person name="Richardson P."/>
        </authorList>
    </citation>
    <scope>NUCLEOTIDE SEQUENCE [LARGE SCALE GENOMIC DNA]</scope>
    <source>
        <strain>MC40-6</strain>
    </source>
</reference>
<proteinExistence type="inferred from homology"/>
<name>COAD_BURA4</name>
<evidence type="ECO:0000255" key="1">
    <source>
        <dbReference type="HAMAP-Rule" id="MF_00151"/>
    </source>
</evidence>
<dbReference type="EC" id="2.7.7.3" evidence="1"/>
<dbReference type="EMBL" id="CP001025">
    <property type="protein sequence ID" value="ACB65202.1"/>
    <property type="molecule type" value="Genomic_DNA"/>
</dbReference>
<dbReference type="RefSeq" id="WP_006398238.1">
    <property type="nucleotide sequence ID" value="NC_010551.1"/>
</dbReference>
<dbReference type="SMR" id="B1YN57"/>
<dbReference type="GeneID" id="98103885"/>
<dbReference type="KEGG" id="bac:BamMC406_2725"/>
<dbReference type="HOGENOM" id="CLU_100149_0_1_4"/>
<dbReference type="OrthoDB" id="9806661at2"/>
<dbReference type="UniPathway" id="UPA00241">
    <property type="reaction ID" value="UER00355"/>
</dbReference>
<dbReference type="Proteomes" id="UP000001680">
    <property type="component" value="Chromosome 1"/>
</dbReference>
<dbReference type="GO" id="GO:0005737">
    <property type="term" value="C:cytoplasm"/>
    <property type="evidence" value="ECO:0007669"/>
    <property type="project" value="UniProtKB-SubCell"/>
</dbReference>
<dbReference type="GO" id="GO:0005524">
    <property type="term" value="F:ATP binding"/>
    <property type="evidence" value="ECO:0007669"/>
    <property type="project" value="UniProtKB-KW"/>
</dbReference>
<dbReference type="GO" id="GO:0004595">
    <property type="term" value="F:pantetheine-phosphate adenylyltransferase activity"/>
    <property type="evidence" value="ECO:0007669"/>
    <property type="project" value="UniProtKB-UniRule"/>
</dbReference>
<dbReference type="GO" id="GO:0015937">
    <property type="term" value="P:coenzyme A biosynthetic process"/>
    <property type="evidence" value="ECO:0007669"/>
    <property type="project" value="UniProtKB-UniRule"/>
</dbReference>
<dbReference type="CDD" id="cd02163">
    <property type="entry name" value="PPAT"/>
    <property type="match status" value="1"/>
</dbReference>
<dbReference type="Gene3D" id="3.40.50.620">
    <property type="entry name" value="HUPs"/>
    <property type="match status" value="1"/>
</dbReference>
<dbReference type="HAMAP" id="MF_00151">
    <property type="entry name" value="PPAT_bact"/>
    <property type="match status" value="1"/>
</dbReference>
<dbReference type="InterPro" id="IPR004821">
    <property type="entry name" value="Cyt_trans-like"/>
</dbReference>
<dbReference type="InterPro" id="IPR001980">
    <property type="entry name" value="PPAT"/>
</dbReference>
<dbReference type="InterPro" id="IPR014729">
    <property type="entry name" value="Rossmann-like_a/b/a_fold"/>
</dbReference>
<dbReference type="NCBIfam" id="TIGR01510">
    <property type="entry name" value="coaD_prev_kdtB"/>
    <property type="match status" value="1"/>
</dbReference>
<dbReference type="NCBIfam" id="TIGR00125">
    <property type="entry name" value="cyt_tran_rel"/>
    <property type="match status" value="1"/>
</dbReference>
<dbReference type="PANTHER" id="PTHR21342">
    <property type="entry name" value="PHOSPHOPANTETHEINE ADENYLYLTRANSFERASE"/>
    <property type="match status" value="1"/>
</dbReference>
<dbReference type="PANTHER" id="PTHR21342:SF1">
    <property type="entry name" value="PHOSPHOPANTETHEINE ADENYLYLTRANSFERASE"/>
    <property type="match status" value="1"/>
</dbReference>
<dbReference type="Pfam" id="PF01467">
    <property type="entry name" value="CTP_transf_like"/>
    <property type="match status" value="1"/>
</dbReference>
<dbReference type="PRINTS" id="PR01020">
    <property type="entry name" value="LPSBIOSNTHSS"/>
</dbReference>
<dbReference type="SUPFAM" id="SSF52374">
    <property type="entry name" value="Nucleotidylyl transferase"/>
    <property type="match status" value="1"/>
</dbReference>
<gene>
    <name evidence="1" type="primary">coaD</name>
    <name type="ordered locus">BamMC406_2725</name>
</gene>
<keyword id="KW-0067">ATP-binding</keyword>
<keyword id="KW-0173">Coenzyme A biosynthesis</keyword>
<keyword id="KW-0963">Cytoplasm</keyword>
<keyword id="KW-0460">Magnesium</keyword>
<keyword id="KW-0547">Nucleotide-binding</keyword>
<keyword id="KW-0548">Nucleotidyltransferase</keyword>
<keyword id="KW-0808">Transferase</keyword>
<organism>
    <name type="scientific">Burkholderia ambifaria (strain MC40-6)</name>
    <dbReference type="NCBI Taxonomy" id="398577"/>
    <lineage>
        <taxon>Bacteria</taxon>
        <taxon>Pseudomonadati</taxon>
        <taxon>Pseudomonadota</taxon>
        <taxon>Betaproteobacteria</taxon>
        <taxon>Burkholderiales</taxon>
        <taxon>Burkholderiaceae</taxon>
        <taxon>Burkholderia</taxon>
        <taxon>Burkholderia cepacia complex</taxon>
    </lineage>
</organism>